<reference key="1">
    <citation type="journal article" date="2004" name="J. Mol. Microbiol. Biotechnol.">
        <title>The complete genome sequence of Bacillus licheniformis DSM13, an organism with great industrial potential.</title>
        <authorList>
            <person name="Veith B."/>
            <person name="Herzberg C."/>
            <person name="Steckel S."/>
            <person name="Feesche J."/>
            <person name="Maurer K.H."/>
            <person name="Ehrenreich P."/>
            <person name="Baeumer S."/>
            <person name="Henne A."/>
            <person name="Liesegang H."/>
            <person name="Merkl R."/>
            <person name="Ehrenreich A."/>
            <person name="Gottschalk G."/>
        </authorList>
    </citation>
    <scope>NUCLEOTIDE SEQUENCE [LARGE SCALE GENOMIC DNA]</scope>
    <source>
        <strain>ATCC 14580 / DSM 13 / JCM 2505 / CCUG 7422 / NBRC 12200 / NCIMB 9375 / NCTC 10341 / NRRL NRS-1264 / Gibson 46</strain>
    </source>
</reference>
<reference key="2">
    <citation type="journal article" date="2004" name="Genome Biol.">
        <title>Complete genome sequence of the industrial bacterium Bacillus licheniformis and comparisons with closely related Bacillus species.</title>
        <authorList>
            <person name="Rey M.W."/>
            <person name="Ramaiya P."/>
            <person name="Nelson B.A."/>
            <person name="Brody-Karpin S.D."/>
            <person name="Zaretsky E.J."/>
            <person name="Tang M."/>
            <person name="Lopez de Leon A."/>
            <person name="Xiang H."/>
            <person name="Gusti V."/>
            <person name="Clausen I.G."/>
            <person name="Olsen P.B."/>
            <person name="Rasmussen M.D."/>
            <person name="Andersen J.T."/>
            <person name="Joergensen P.L."/>
            <person name="Larsen T.S."/>
            <person name="Sorokin A."/>
            <person name="Bolotin A."/>
            <person name="Lapidus A."/>
            <person name="Galleron N."/>
            <person name="Ehrlich S.D."/>
            <person name="Berka R.M."/>
        </authorList>
    </citation>
    <scope>NUCLEOTIDE SEQUENCE [LARGE SCALE GENOMIC DNA]</scope>
    <source>
        <strain>ATCC 14580 / DSM 13 / JCM 2505 / CCUG 7422 / NBRC 12200 / NCIMB 9375 / NCTC 10341 / NRRL NRS-1264 / Gibson 46</strain>
    </source>
</reference>
<name>METN2_BACLD</name>
<evidence type="ECO:0000255" key="1">
    <source>
        <dbReference type="HAMAP-Rule" id="MF_01719"/>
    </source>
</evidence>
<keyword id="KW-0029">Amino-acid transport</keyword>
<keyword id="KW-0067">ATP-binding</keyword>
<keyword id="KW-1003">Cell membrane</keyword>
<keyword id="KW-0472">Membrane</keyword>
<keyword id="KW-0547">Nucleotide-binding</keyword>
<keyword id="KW-1185">Reference proteome</keyword>
<keyword id="KW-1278">Translocase</keyword>
<keyword id="KW-0813">Transport</keyword>
<organism>
    <name type="scientific">Bacillus licheniformis (strain ATCC 14580 / DSM 13 / JCM 2505 / CCUG 7422 / NBRC 12200 / NCIMB 9375 / NCTC 10341 / NRRL NRS-1264 / Gibson 46)</name>
    <dbReference type="NCBI Taxonomy" id="279010"/>
    <lineage>
        <taxon>Bacteria</taxon>
        <taxon>Bacillati</taxon>
        <taxon>Bacillota</taxon>
        <taxon>Bacilli</taxon>
        <taxon>Bacillales</taxon>
        <taxon>Bacillaceae</taxon>
        <taxon>Bacillus</taxon>
    </lineage>
</organism>
<accession>Q65F80</accession>
<accession>Q62QP5</accession>
<gene>
    <name evidence="1" type="primary">metN2</name>
    <name type="ordered locus">BLi03457</name>
    <name type="ordered locus">BL02171</name>
</gene>
<protein>
    <recommendedName>
        <fullName evidence="1">Methionine import ATP-binding protein MetN 2</fullName>
        <ecNumber evidence="1">7.4.2.11</ecNumber>
    </recommendedName>
</protein>
<proteinExistence type="inferred from homology"/>
<comment type="function">
    <text evidence="1">Part of the ABC transporter complex MetNIQ involved in methionine import. Responsible for energy coupling to the transport system.</text>
</comment>
<comment type="catalytic activity">
    <reaction evidence="1">
        <text>L-methionine(out) + ATP + H2O = L-methionine(in) + ADP + phosphate + H(+)</text>
        <dbReference type="Rhea" id="RHEA:29779"/>
        <dbReference type="ChEBI" id="CHEBI:15377"/>
        <dbReference type="ChEBI" id="CHEBI:15378"/>
        <dbReference type="ChEBI" id="CHEBI:30616"/>
        <dbReference type="ChEBI" id="CHEBI:43474"/>
        <dbReference type="ChEBI" id="CHEBI:57844"/>
        <dbReference type="ChEBI" id="CHEBI:456216"/>
        <dbReference type="EC" id="7.4.2.11"/>
    </reaction>
</comment>
<comment type="catalytic activity">
    <reaction evidence="1">
        <text>D-methionine(out) + ATP + H2O = D-methionine(in) + ADP + phosphate + H(+)</text>
        <dbReference type="Rhea" id="RHEA:29767"/>
        <dbReference type="ChEBI" id="CHEBI:15377"/>
        <dbReference type="ChEBI" id="CHEBI:15378"/>
        <dbReference type="ChEBI" id="CHEBI:30616"/>
        <dbReference type="ChEBI" id="CHEBI:43474"/>
        <dbReference type="ChEBI" id="CHEBI:57932"/>
        <dbReference type="ChEBI" id="CHEBI:456216"/>
        <dbReference type="EC" id="7.4.2.11"/>
    </reaction>
</comment>
<comment type="subunit">
    <text evidence="1">The complex is composed of two ATP-binding proteins (MetN), two transmembrane proteins (MetI) and a solute-binding protein (MetQ).</text>
</comment>
<comment type="subcellular location">
    <subcellularLocation>
        <location evidence="1">Cell membrane</location>
        <topology evidence="1">Peripheral membrane protein</topology>
    </subcellularLocation>
</comment>
<comment type="similarity">
    <text evidence="1">Belongs to the ABC transporter superfamily. Methionine importer (TC 3.A.1.24) family.</text>
</comment>
<sequence>MINLQNVSKIYRSKHGDVNAVQDVTLTIKKGEIFGIIGYSGAGKSSLIRLLNGLEQPTSGTVEVAGRKISEIKGKKLRKARQEISMIFQHFNLLWSRTVRDNIAFPLEIAGVSKAKRLERVAELIKLVGLEGKENAYPSQLSGGQKQRVGIARALANNPKVLLCDEATSALDPQTTDSILGLLSDINERLGLTIVLITHEMHVIRKICHRVAVMENGKVVEEGDVLNVFIKPKEEMTKRFVQQVTEPVETKETLKHFLEETTSGRTIKLTFVGEAAESPLITQIIRKFDVEVNILQGKISQTQDGAYGSLFIHVDGRENEVNDVVDFIKSRQVEAEVITNV</sequence>
<feature type="chain" id="PRO_0000270246" description="Methionine import ATP-binding protein MetN 2">
    <location>
        <begin position="1"/>
        <end position="341"/>
    </location>
</feature>
<feature type="domain" description="ABC transporter" evidence="1">
    <location>
        <begin position="2"/>
        <end position="241"/>
    </location>
</feature>
<feature type="binding site" evidence="1">
    <location>
        <begin position="38"/>
        <end position="45"/>
    </location>
    <ligand>
        <name>ATP</name>
        <dbReference type="ChEBI" id="CHEBI:30616"/>
    </ligand>
</feature>
<dbReference type="EC" id="7.4.2.11" evidence="1"/>
<dbReference type="EMBL" id="AE017333">
    <property type="protein sequence ID" value="AAU42284.1"/>
    <property type="molecule type" value="Genomic_DNA"/>
</dbReference>
<dbReference type="EMBL" id="CP000002">
    <property type="protein sequence ID" value="AAU24915.1"/>
    <property type="molecule type" value="Genomic_DNA"/>
</dbReference>
<dbReference type="SMR" id="Q65F80"/>
<dbReference type="STRING" id="279010.BL02171"/>
<dbReference type="KEGG" id="bld:BLi03457"/>
<dbReference type="KEGG" id="bli:BL02171"/>
<dbReference type="eggNOG" id="COG1135">
    <property type="taxonomic scope" value="Bacteria"/>
</dbReference>
<dbReference type="HOGENOM" id="CLU_000604_1_3_9"/>
<dbReference type="Proteomes" id="UP000000606">
    <property type="component" value="Chromosome"/>
</dbReference>
<dbReference type="GO" id="GO:0005886">
    <property type="term" value="C:plasma membrane"/>
    <property type="evidence" value="ECO:0007669"/>
    <property type="project" value="UniProtKB-SubCell"/>
</dbReference>
<dbReference type="GO" id="GO:0033232">
    <property type="term" value="F:ABC-type D-methionine transporter activity"/>
    <property type="evidence" value="ECO:0007669"/>
    <property type="project" value="UniProtKB-EC"/>
</dbReference>
<dbReference type="GO" id="GO:0005524">
    <property type="term" value="F:ATP binding"/>
    <property type="evidence" value="ECO:0007669"/>
    <property type="project" value="UniProtKB-KW"/>
</dbReference>
<dbReference type="GO" id="GO:0016887">
    <property type="term" value="F:ATP hydrolysis activity"/>
    <property type="evidence" value="ECO:0007669"/>
    <property type="project" value="InterPro"/>
</dbReference>
<dbReference type="CDD" id="cd03258">
    <property type="entry name" value="ABC_MetN_methionine_transporter"/>
    <property type="match status" value="1"/>
</dbReference>
<dbReference type="FunFam" id="3.40.50.300:FF:000056">
    <property type="entry name" value="Cell division ATP-binding protein FtsE"/>
    <property type="match status" value="1"/>
</dbReference>
<dbReference type="Gene3D" id="3.30.70.260">
    <property type="match status" value="1"/>
</dbReference>
<dbReference type="Gene3D" id="3.40.50.300">
    <property type="entry name" value="P-loop containing nucleotide triphosphate hydrolases"/>
    <property type="match status" value="1"/>
</dbReference>
<dbReference type="InterPro" id="IPR003593">
    <property type="entry name" value="AAA+_ATPase"/>
</dbReference>
<dbReference type="InterPro" id="IPR003439">
    <property type="entry name" value="ABC_transporter-like_ATP-bd"/>
</dbReference>
<dbReference type="InterPro" id="IPR017871">
    <property type="entry name" value="ABC_transporter-like_CS"/>
</dbReference>
<dbReference type="InterPro" id="IPR045865">
    <property type="entry name" value="ACT-like_dom_sf"/>
</dbReference>
<dbReference type="InterPro" id="IPR041701">
    <property type="entry name" value="MetN_ABC"/>
</dbReference>
<dbReference type="InterPro" id="IPR050086">
    <property type="entry name" value="MetN_ABC_transporter-like"/>
</dbReference>
<dbReference type="InterPro" id="IPR018449">
    <property type="entry name" value="NIL_domain"/>
</dbReference>
<dbReference type="InterPro" id="IPR027417">
    <property type="entry name" value="P-loop_NTPase"/>
</dbReference>
<dbReference type="PANTHER" id="PTHR43166">
    <property type="entry name" value="AMINO ACID IMPORT ATP-BINDING PROTEIN"/>
    <property type="match status" value="1"/>
</dbReference>
<dbReference type="PANTHER" id="PTHR43166:SF36">
    <property type="entry name" value="METHIONINE IMPORT ATP-BINDING PROTEIN METN 2"/>
    <property type="match status" value="1"/>
</dbReference>
<dbReference type="Pfam" id="PF00005">
    <property type="entry name" value="ABC_tran"/>
    <property type="match status" value="1"/>
</dbReference>
<dbReference type="Pfam" id="PF09383">
    <property type="entry name" value="NIL"/>
    <property type="match status" value="1"/>
</dbReference>
<dbReference type="SMART" id="SM00382">
    <property type="entry name" value="AAA"/>
    <property type="match status" value="1"/>
</dbReference>
<dbReference type="SMART" id="SM00930">
    <property type="entry name" value="NIL"/>
    <property type="match status" value="1"/>
</dbReference>
<dbReference type="SUPFAM" id="SSF55021">
    <property type="entry name" value="ACT-like"/>
    <property type="match status" value="1"/>
</dbReference>
<dbReference type="SUPFAM" id="SSF52540">
    <property type="entry name" value="P-loop containing nucleoside triphosphate hydrolases"/>
    <property type="match status" value="1"/>
</dbReference>
<dbReference type="PROSITE" id="PS00211">
    <property type="entry name" value="ABC_TRANSPORTER_1"/>
    <property type="match status" value="1"/>
</dbReference>
<dbReference type="PROSITE" id="PS50893">
    <property type="entry name" value="ABC_TRANSPORTER_2"/>
    <property type="match status" value="1"/>
</dbReference>
<dbReference type="PROSITE" id="PS51264">
    <property type="entry name" value="METN"/>
    <property type="match status" value="1"/>
</dbReference>